<dbReference type="EMBL" id="CP000911">
    <property type="protein sequence ID" value="ABY38319.1"/>
    <property type="molecule type" value="Genomic_DNA"/>
</dbReference>
<dbReference type="RefSeq" id="WP_004683921.1">
    <property type="nucleotide sequence ID" value="NC_010169.1"/>
</dbReference>
<dbReference type="SMR" id="B0CH18"/>
<dbReference type="GeneID" id="97533538"/>
<dbReference type="KEGG" id="bmt:BSUIS_A1268"/>
<dbReference type="HOGENOM" id="CLU_098428_0_0_5"/>
<dbReference type="Proteomes" id="UP000008545">
    <property type="component" value="Chromosome I"/>
</dbReference>
<dbReference type="GO" id="GO:1990904">
    <property type="term" value="C:ribonucleoprotein complex"/>
    <property type="evidence" value="ECO:0007669"/>
    <property type="project" value="UniProtKB-KW"/>
</dbReference>
<dbReference type="GO" id="GO:0005840">
    <property type="term" value="C:ribosome"/>
    <property type="evidence" value="ECO:0007669"/>
    <property type="project" value="UniProtKB-KW"/>
</dbReference>
<dbReference type="GO" id="GO:0019843">
    <property type="term" value="F:rRNA binding"/>
    <property type="evidence" value="ECO:0007669"/>
    <property type="project" value="UniProtKB-UniRule"/>
</dbReference>
<dbReference type="GO" id="GO:0003735">
    <property type="term" value="F:structural constituent of ribosome"/>
    <property type="evidence" value="ECO:0007669"/>
    <property type="project" value="InterPro"/>
</dbReference>
<dbReference type="GO" id="GO:0006412">
    <property type="term" value="P:translation"/>
    <property type="evidence" value="ECO:0007669"/>
    <property type="project" value="UniProtKB-UniRule"/>
</dbReference>
<dbReference type="FunFam" id="3.30.1370.30:FF:000002">
    <property type="entry name" value="30S ribosomal protein S8"/>
    <property type="match status" value="1"/>
</dbReference>
<dbReference type="FunFam" id="3.30.1490.10:FF:000001">
    <property type="entry name" value="30S ribosomal protein S8"/>
    <property type="match status" value="1"/>
</dbReference>
<dbReference type="Gene3D" id="3.30.1370.30">
    <property type="match status" value="1"/>
</dbReference>
<dbReference type="Gene3D" id="3.30.1490.10">
    <property type="match status" value="1"/>
</dbReference>
<dbReference type="HAMAP" id="MF_01302_B">
    <property type="entry name" value="Ribosomal_uS8_B"/>
    <property type="match status" value="1"/>
</dbReference>
<dbReference type="InterPro" id="IPR000630">
    <property type="entry name" value="Ribosomal_uS8"/>
</dbReference>
<dbReference type="InterPro" id="IPR047863">
    <property type="entry name" value="Ribosomal_uS8_CS"/>
</dbReference>
<dbReference type="InterPro" id="IPR035987">
    <property type="entry name" value="Ribosomal_uS8_sf"/>
</dbReference>
<dbReference type="NCBIfam" id="NF001109">
    <property type="entry name" value="PRK00136.1"/>
    <property type="match status" value="1"/>
</dbReference>
<dbReference type="PANTHER" id="PTHR11758">
    <property type="entry name" value="40S RIBOSOMAL PROTEIN S15A"/>
    <property type="match status" value="1"/>
</dbReference>
<dbReference type="Pfam" id="PF00410">
    <property type="entry name" value="Ribosomal_S8"/>
    <property type="match status" value="1"/>
</dbReference>
<dbReference type="SUPFAM" id="SSF56047">
    <property type="entry name" value="Ribosomal protein S8"/>
    <property type="match status" value="1"/>
</dbReference>
<dbReference type="PROSITE" id="PS00053">
    <property type="entry name" value="RIBOSOMAL_S8"/>
    <property type="match status" value="1"/>
</dbReference>
<comment type="function">
    <text evidence="1">One of the primary rRNA binding proteins, it binds directly to 16S rRNA central domain where it helps coordinate assembly of the platform of the 30S subunit.</text>
</comment>
<comment type="subunit">
    <text evidence="1">Part of the 30S ribosomal subunit. Contacts proteins S5 and S12.</text>
</comment>
<comment type="similarity">
    <text evidence="1">Belongs to the universal ribosomal protein uS8 family.</text>
</comment>
<sequence length="132" mass="14604">MSVSDPLGDMLTRIRNAVGRKKTKVSTPASKLRARVLDVLQAEGYIRGYTQSEFENGKAEIEIELKYYEGVPVIREITRVSKPGRRVYVSVKSIPQVANGLGISILSTPKGVMADHEAREQNVGGELLCRIF</sequence>
<keyword id="KW-0687">Ribonucleoprotein</keyword>
<keyword id="KW-0689">Ribosomal protein</keyword>
<keyword id="KW-0694">RNA-binding</keyword>
<keyword id="KW-0699">rRNA-binding</keyword>
<accession>B0CH18</accession>
<evidence type="ECO:0000255" key="1">
    <source>
        <dbReference type="HAMAP-Rule" id="MF_01302"/>
    </source>
</evidence>
<evidence type="ECO:0000305" key="2"/>
<protein>
    <recommendedName>
        <fullName evidence="1">Small ribosomal subunit protein uS8</fullName>
    </recommendedName>
    <alternativeName>
        <fullName evidence="2">30S ribosomal protein S8</fullName>
    </alternativeName>
</protein>
<feature type="chain" id="PRO_1000085912" description="Small ribosomal subunit protein uS8">
    <location>
        <begin position="1"/>
        <end position="132"/>
    </location>
</feature>
<name>RS8_BRUSI</name>
<organism>
    <name type="scientific">Brucella suis (strain ATCC 23445 / NCTC 10510)</name>
    <dbReference type="NCBI Taxonomy" id="470137"/>
    <lineage>
        <taxon>Bacteria</taxon>
        <taxon>Pseudomonadati</taxon>
        <taxon>Pseudomonadota</taxon>
        <taxon>Alphaproteobacteria</taxon>
        <taxon>Hyphomicrobiales</taxon>
        <taxon>Brucellaceae</taxon>
        <taxon>Brucella/Ochrobactrum group</taxon>
        <taxon>Brucella</taxon>
    </lineage>
</organism>
<reference key="1">
    <citation type="submission" date="2007-12" db="EMBL/GenBank/DDBJ databases">
        <title>Brucella suis ATCC 23445 whole genome shotgun sequencing project.</title>
        <authorList>
            <person name="Setubal J.C."/>
            <person name="Bowns C."/>
            <person name="Boyle S."/>
            <person name="Crasta O.R."/>
            <person name="Czar M.J."/>
            <person name="Dharmanolla C."/>
            <person name="Gillespie J.J."/>
            <person name="Kenyon R.W."/>
            <person name="Lu J."/>
            <person name="Mane S."/>
            <person name="Mohapatra S."/>
            <person name="Nagrani S."/>
            <person name="Purkayastha A."/>
            <person name="Rajasimha H.K."/>
            <person name="Shallom J.M."/>
            <person name="Shallom S."/>
            <person name="Shukla M."/>
            <person name="Snyder E.E."/>
            <person name="Sobral B.W."/>
            <person name="Wattam A.R."/>
            <person name="Will R."/>
            <person name="Williams K."/>
            <person name="Yoo H."/>
            <person name="Bruce D."/>
            <person name="Detter C."/>
            <person name="Munk C."/>
            <person name="Brettin T.S."/>
        </authorList>
    </citation>
    <scope>NUCLEOTIDE SEQUENCE [LARGE SCALE GENOMIC DNA]</scope>
    <source>
        <strain>ATCC 23445 / NCTC 10510</strain>
    </source>
</reference>
<gene>
    <name evidence="1" type="primary">rpsH</name>
    <name type="ordered locus">BSUIS_A1268</name>
</gene>
<proteinExistence type="inferred from homology"/>